<organism>
    <name type="scientific">Staphylococcus aureus (strain JH9)</name>
    <dbReference type="NCBI Taxonomy" id="359786"/>
    <lineage>
        <taxon>Bacteria</taxon>
        <taxon>Bacillati</taxon>
        <taxon>Bacillota</taxon>
        <taxon>Bacilli</taxon>
        <taxon>Bacillales</taxon>
        <taxon>Staphylococcaceae</taxon>
        <taxon>Staphylococcus</taxon>
    </lineage>
</organism>
<protein>
    <recommendedName>
        <fullName evidence="1">NH(3)-dependent NAD(+) synthetase</fullName>
        <ecNumber evidence="1">6.3.1.5</ecNumber>
    </recommendedName>
</protein>
<proteinExistence type="inferred from homology"/>
<dbReference type="EC" id="6.3.1.5" evidence="1"/>
<dbReference type="EMBL" id="CP000703">
    <property type="protein sequence ID" value="ABQ49753.1"/>
    <property type="molecule type" value="Genomic_DNA"/>
</dbReference>
<dbReference type="RefSeq" id="WP_000040866.1">
    <property type="nucleotide sequence ID" value="NC_009487.1"/>
</dbReference>
<dbReference type="SMR" id="A5IU80"/>
<dbReference type="KEGG" id="saj:SaurJH9_1968"/>
<dbReference type="HOGENOM" id="CLU_059327_3_0_9"/>
<dbReference type="UniPathway" id="UPA00253">
    <property type="reaction ID" value="UER00333"/>
</dbReference>
<dbReference type="GO" id="GO:0005737">
    <property type="term" value="C:cytoplasm"/>
    <property type="evidence" value="ECO:0007669"/>
    <property type="project" value="InterPro"/>
</dbReference>
<dbReference type="GO" id="GO:0005524">
    <property type="term" value="F:ATP binding"/>
    <property type="evidence" value="ECO:0007669"/>
    <property type="project" value="UniProtKB-UniRule"/>
</dbReference>
<dbReference type="GO" id="GO:0004359">
    <property type="term" value="F:glutaminase activity"/>
    <property type="evidence" value="ECO:0007669"/>
    <property type="project" value="InterPro"/>
</dbReference>
<dbReference type="GO" id="GO:0046872">
    <property type="term" value="F:metal ion binding"/>
    <property type="evidence" value="ECO:0007669"/>
    <property type="project" value="UniProtKB-KW"/>
</dbReference>
<dbReference type="GO" id="GO:0003952">
    <property type="term" value="F:NAD+ synthase (glutamine-hydrolyzing) activity"/>
    <property type="evidence" value="ECO:0007669"/>
    <property type="project" value="InterPro"/>
</dbReference>
<dbReference type="GO" id="GO:0008795">
    <property type="term" value="F:NAD+ synthase activity"/>
    <property type="evidence" value="ECO:0007669"/>
    <property type="project" value="UniProtKB-UniRule"/>
</dbReference>
<dbReference type="GO" id="GO:0009435">
    <property type="term" value="P:NAD biosynthetic process"/>
    <property type="evidence" value="ECO:0007669"/>
    <property type="project" value="UniProtKB-UniRule"/>
</dbReference>
<dbReference type="CDD" id="cd00553">
    <property type="entry name" value="NAD_synthase"/>
    <property type="match status" value="1"/>
</dbReference>
<dbReference type="FunFam" id="3.40.50.620:FF:000015">
    <property type="entry name" value="NH(3)-dependent NAD(+) synthetase"/>
    <property type="match status" value="1"/>
</dbReference>
<dbReference type="Gene3D" id="3.40.50.620">
    <property type="entry name" value="HUPs"/>
    <property type="match status" value="1"/>
</dbReference>
<dbReference type="HAMAP" id="MF_00193">
    <property type="entry name" value="NadE_ammonia_dep"/>
    <property type="match status" value="1"/>
</dbReference>
<dbReference type="InterPro" id="IPR022310">
    <property type="entry name" value="NAD/GMP_synthase"/>
</dbReference>
<dbReference type="InterPro" id="IPR003694">
    <property type="entry name" value="NAD_synthase"/>
</dbReference>
<dbReference type="InterPro" id="IPR022926">
    <property type="entry name" value="NH(3)-dep_NAD(+)_synth"/>
</dbReference>
<dbReference type="InterPro" id="IPR014729">
    <property type="entry name" value="Rossmann-like_a/b/a_fold"/>
</dbReference>
<dbReference type="NCBIfam" id="TIGR00552">
    <property type="entry name" value="nadE"/>
    <property type="match status" value="1"/>
</dbReference>
<dbReference type="NCBIfam" id="NF001979">
    <property type="entry name" value="PRK00768.1"/>
    <property type="match status" value="1"/>
</dbReference>
<dbReference type="PANTHER" id="PTHR23090">
    <property type="entry name" value="NH 3 /GLUTAMINE-DEPENDENT NAD + SYNTHETASE"/>
    <property type="match status" value="1"/>
</dbReference>
<dbReference type="PANTHER" id="PTHR23090:SF7">
    <property type="entry name" value="NH(3)-DEPENDENT NAD(+) SYNTHETASE"/>
    <property type="match status" value="1"/>
</dbReference>
<dbReference type="Pfam" id="PF02540">
    <property type="entry name" value="NAD_synthase"/>
    <property type="match status" value="1"/>
</dbReference>
<dbReference type="SUPFAM" id="SSF52402">
    <property type="entry name" value="Adenine nucleotide alpha hydrolases-like"/>
    <property type="match status" value="1"/>
</dbReference>
<feature type="chain" id="PRO_1000077616" description="NH(3)-dependent NAD(+) synthetase">
    <location>
        <begin position="1"/>
        <end position="273"/>
    </location>
</feature>
<feature type="binding site" evidence="1">
    <location>
        <begin position="47"/>
        <end position="54"/>
    </location>
    <ligand>
        <name>ATP</name>
        <dbReference type="ChEBI" id="CHEBI:30616"/>
    </ligand>
</feature>
<feature type="binding site" evidence="1">
    <location>
        <position position="53"/>
    </location>
    <ligand>
        <name>Mg(2+)</name>
        <dbReference type="ChEBI" id="CHEBI:18420"/>
    </ligand>
</feature>
<feature type="binding site" evidence="1">
    <location>
        <position position="139"/>
    </location>
    <ligand>
        <name>deamido-NAD(+)</name>
        <dbReference type="ChEBI" id="CHEBI:58437"/>
    </ligand>
</feature>
<feature type="binding site" evidence="1">
    <location>
        <position position="159"/>
    </location>
    <ligand>
        <name>ATP</name>
        <dbReference type="ChEBI" id="CHEBI:30616"/>
    </ligand>
</feature>
<feature type="binding site" evidence="1">
    <location>
        <position position="164"/>
    </location>
    <ligand>
        <name>Mg(2+)</name>
        <dbReference type="ChEBI" id="CHEBI:18420"/>
    </ligand>
</feature>
<feature type="binding site" evidence="1">
    <location>
        <position position="172"/>
    </location>
    <ligand>
        <name>deamido-NAD(+)</name>
        <dbReference type="ChEBI" id="CHEBI:58437"/>
    </ligand>
</feature>
<feature type="binding site" evidence="1">
    <location>
        <position position="179"/>
    </location>
    <ligand>
        <name>deamido-NAD(+)</name>
        <dbReference type="ChEBI" id="CHEBI:58437"/>
    </ligand>
</feature>
<feature type="binding site" evidence="1">
    <location>
        <position position="188"/>
    </location>
    <ligand>
        <name>ATP</name>
        <dbReference type="ChEBI" id="CHEBI:30616"/>
    </ligand>
</feature>
<feature type="binding site" evidence="1">
    <location>
        <position position="210"/>
    </location>
    <ligand>
        <name>ATP</name>
        <dbReference type="ChEBI" id="CHEBI:30616"/>
    </ligand>
</feature>
<feature type="binding site" evidence="1">
    <location>
        <begin position="259"/>
        <end position="260"/>
    </location>
    <ligand>
        <name>deamido-NAD(+)</name>
        <dbReference type="ChEBI" id="CHEBI:58437"/>
    </ligand>
</feature>
<name>NADE_STAA9</name>
<evidence type="ECO:0000255" key="1">
    <source>
        <dbReference type="HAMAP-Rule" id="MF_00193"/>
    </source>
</evidence>
<reference key="1">
    <citation type="submission" date="2007-05" db="EMBL/GenBank/DDBJ databases">
        <title>Complete sequence of chromosome of Staphylococcus aureus subsp. aureus JH9.</title>
        <authorList>
            <consortium name="US DOE Joint Genome Institute"/>
            <person name="Copeland A."/>
            <person name="Lucas S."/>
            <person name="Lapidus A."/>
            <person name="Barry K."/>
            <person name="Detter J.C."/>
            <person name="Glavina del Rio T."/>
            <person name="Hammon N."/>
            <person name="Israni S."/>
            <person name="Pitluck S."/>
            <person name="Chain P."/>
            <person name="Malfatti S."/>
            <person name="Shin M."/>
            <person name="Vergez L."/>
            <person name="Schmutz J."/>
            <person name="Larimer F."/>
            <person name="Land M."/>
            <person name="Hauser L."/>
            <person name="Kyrpides N."/>
            <person name="Kim E."/>
            <person name="Tomasz A."/>
            <person name="Richardson P."/>
        </authorList>
    </citation>
    <scope>NUCLEOTIDE SEQUENCE [LARGE SCALE GENOMIC DNA]</scope>
    <source>
        <strain>JH9</strain>
    </source>
</reference>
<sequence>MSKLQDVIVQEMKVKKRIDSAEEIMELKQFIKNYVQSHSFIKSLVLGISGGQDSTLVGKLVQMSVNELREEGIDCTFIAVKLPYGVQKDADEVDQALRFIEPDEIVTVNIKPAVDQSVQSLKEAGIVLTDFQKGNEKARERMKVQFSIASNRQGIVVGTDHSAENITGFYTKYGDGAADIAPIFGLNKRQGRQLLAYLGAPKELYEKTPTADLEDDKPQLPDEDALGVTYEAIDNYLEGKPVTPEEQKVIENHYIRNAHKRELAYTRYTWPKS</sequence>
<gene>
    <name evidence="1" type="primary">nadE</name>
    <name type="ordered locus">SaurJH9_1968</name>
</gene>
<accession>A5IU80</accession>
<keyword id="KW-0067">ATP-binding</keyword>
<keyword id="KW-0436">Ligase</keyword>
<keyword id="KW-0460">Magnesium</keyword>
<keyword id="KW-0479">Metal-binding</keyword>
<keyword id="KW-0520">NAD</keyword>
<keyword id="KW-0547">Nucleotide-binding</keyword>
<comment type="function">
    <text evidence="1">Catalyzes the ATP-dependent amidation of deamido-NAD to form NAD. Uses ammonia as a nitrogen source.</text>
</comment>
<comment type="catalytic activity">
    <reaction evidence="1">
        <text>deamido-NAD(+) + NH4(+) + ATP = AMP + diphosphate + NAD(+) + H(+)</text>
        <dbReference type="Rhea" id="RHEA:21188"/>
        <dbReference type="ChEBI" id="CHEBI:15378"/>
        <dbReference type="ChEBI" id="CHEBI:28938"/>
        <dbReference type="ChEBI" id="CHEBI:30616"/>
        <dbReference type="ChEBI" id="CHEBI:33019"/>
        <dbReference type="ChEBI" id="CHEBI:57540"/>
        <dbReference type="ChEBI" id="CHEBI:58437"/>
        <dbReference type="ChEBI" id="CHEBI:456215"/>
        <dbReference type="EC" id="6.3.1.5"/>
    </reaction>
</comment>
<comment type="pathway">
    <text evidence="1">Cofactor biosynthesis; NAD(+) biosynthesis; NAD(+) from deamido-NAD(+) (ammonia route): step 1/1.</text>
</comment>
<comment type="subunit">
    <text evidence="1">Homodimer.</text>
</comment>
<comment type="similarity">
    <text evidence="1">Belongs to the NAD synthetase family.</text>
</comment>